<comment type="function">
    <text evidence="1">Participates in various redox reactions through the reversible oxidation of the active center dithiol to a disulfide. The H form is known to activate a number of cytosolic enzymes (By similarity).</text>
</comment>
<comment type="subcellular location">
    <subcellularLocation>
        <location evidence="1">Cytoplasm</location>
    </subcellularLocation>
</comment>
<comment type="similarity">
    <text evidence="4">Belongs to the thioredoxin family. Plant H-type subfamily.</text>
</comment>
<organism>
    <name type="scientific">Brassica napus</name>
    <name type="common">Rape</name>
    <dbReference type="NCBI Taxonomy" id="3708"/>
    <lineage>
        <taxon>Eukaryota</taxon>
        <taxon>Viridiplantae</taxon>
        <taxon>Streptophyta</taxon>
        <taxon>Embryophyta</taxon>
        <taxon>Tracheophyta</taxon>
        <taxon>Spermatophyta</taxon>
        <taxon>Magnoliopsida</taxon>
        <taxon>eudicotyledons</taxon>
        <taxon>Gunneridae</taxon>
        <taxon>Pentapetalae</taxon>
        <taxon>rosids</taxon>
        <taxon>malvids</taxon>
        <taxon>Brassicales</taxon>
        <taxon>Brassicaceae</taxon>
        <taxon>Brassiceae</taxon>
        <taxon>Brassica</taxon>
    </lineage>
</organism>
<accession>P68177</accession>
<accession>Q42388</accession>
<proteinExistence type="evidence at transcript level"/>
<gene>
    <name type="primary">THL-1</name>
</gene>
<keyword id="KW-0007">Acetylation</keyword>
<keyword id="KW-0963">Cytoplasm</keyword>
<keyword id="KW-1015">Disulfide bond</keyword>
<keyword id="KW-0249">Electron transport</keyword>
<keyword id="KW-0676">Redox-active center</keyword>
<keyword id="KW-0813">Transport</keyword>
<reference key="1">
    <citation type="journal article" date="1996" name="Plant Cell">
        <title>Two members of the thioredoxin-h family interact with the kinase domain of a Brassica S locus receptor kinase.</title>
        <authorList>
            <person name="Bower M.S."/>
            <person name="Matias D.D."/>
            <person name="Fernandes-Carvalho E."/>
            <person name="Mazzurco M."/>
            <person name="Gu T."/>
            <person name="Rothstein S.J."/>
            <person name="Goring D.R."/>
        </authorList>
    </citation>
    <scope>NUCLEOTIDE SEQUENCE [MRNA]</scope>
    <source>
        <tissue>Pistil</tissue>
    </source>
</reference>
<evidence type="ECO:0000250" key="1"/>
<evidence type="ECO:0000250" key="2">
    <source>
        <dbReference type="UniProtKB" id="Q42403"/>
    </source>
</evidence>
<evidence type="ECO:0000255" key="3">
    <source>
        <dbReference type="PROSITE-ProRule" id="PRU00691"/>
    </source>
</evidence>
<evidence type="ECO:0000305" key="4"/>
<dbReference type="EMBL" id="U59379">
    <property type="protein sequence ID" value="AAB53694.1"/>
    <property type="molecule type" value="mRNA"/>
</dbReference>
<dbReference type="PIR" id="T08141">
    <property type="entry name" value="T08141"/>
</dbReference>
<dbReference type="RefSeq" id="XP_013702107.1">
    <property type="nucleotide sequence ID" value="XM_013846653.1"/>
</dbReference>
<dbReference type="SMR" id="P68177"/>
<dbReference type="EnsemblPlants" id="CDY43592">
    <property type="protein sequence ID" value="CDY43592"/>
    <property type="gene ID" value="GSBRNA2T00076902001"/>
</dbReference>
<dbReference type="GeneID" id="106406057"/>
<dbReference type="Gramene" id="CDY43592">
    <property type="protein sequence ID" value="CDY43592"/>
    <property type="gene ID" value="GSBRNA2T00076902001"/>
</dbReference>
<dbReference type="KEGG" id="bna:106406057"/>
<dbReference type="OMA" id="CYADWCS"/>
<dbReference type="OrthoDB" id="10263751at2759"/>
<dbReference type="GO" id="GO:0005737">
    <property type="term" value="C:cytoplasm"/>
    <property type="evidence" value="ECO:0007669"/>
    <property type="project" value="UniProtKB-SubCell"/>
</dbReference>
<dbReference type="CDD" id="cd02947">
    <property type="entry name" value="TRX_family"/>
    <property type="match status" value="1"/>
</dbReference>
<dbReference type="FunFam" id="3.40.30.10:FF:000245">
    <property type="entry name" value="Thioredoxin"/>
    <property type="match status" value="1"/>
</dbReference>
<dbReference type="Gene3D" id="3.40.30.10">
    <property type="entry name" value="Glutaredoxin"/>
    <property type="match status" value="1"/>
</dbReference>
<dbReference type="InterPro" id="IPR036249">
    <property type="entry name" value="Thioredoxin-like_sf"/>
</dbReference>
<dbReference type="InterPro" id="IPR017937">
    <property type="entry name" value="Thioredoxin_CS"/>
</dbReference>
<dbReference type="InterPro" id="IPR013766">
    <property type="entry name" value="Thioredoxin_domain"/>
</dbReference>
<dbReference type="InterPro" id="IPR050620">
    <property type="entry name" value="Thioredoxin_H-type-like"/>
</dbReference>
<dbReference type="PANTHER" id="PTHR10438">
    <property type="entry name" value="THIOREDOXIN"/>
    <property type="match status" value="1"/>
</dbReference>
<dbReference type="PANTHER" id="PTHR10438:SF410">
    <property type="entry name" value="THIOREDOXIN H3"/>
    <property type="match status" value="1"/>
</dbReference>
<dbReference type="Pfam" id="PF00085">
    <property type="entry name" value="Thioredoxin"/>
    <property type="match status" value="1"/>
</dbReference>
<dbReference type="PRINTS" id="PR00421">
    <property type="entry name" value="THIOREDOXIN"/>
</dbReference>
<dbReference type="SUPFAM" id="SSF52833">
    <property type="entry name" value="Thioredoxin-like"/>
    <property type="match status" value="1"/>
</dbReference>
<dbReference type="PROSITE" id="PS00194">
    <property type="entry name" value="THIOREDOXIN_1"/>
    <property type="match status" value="1"/>
</dbReference>
<dbReference type="PROSITE" id="PS51352">
    <property type="entry name" value="THIOREDOXIN_2"/>
    <property type="match status" value="1"/>
</dbReference>
<name>TRXH1_BRANA</name>
<protein>
    <recommendedName>
        <fullName>Thioredoxin H-type 1</fullName>
        <shortName>Trx-H-1</shortName>
    </recommendedName>
</protein>
<feature type="initiator methionine" description="Removed" evidence="2">
    <location>
        <position position="1"/>
    </location>
</feature>
<feature type="chain" id="PRO_0000120051" description="Thioredoxin H-type 1">
    <location>
        <begin position="2"/>
        <end position="123"/>
    </location>
</feature>
<feature type="domain" description="Thioredoxin" evidence="3">
    <location>
        <begin position="2"/>
        <end position="119"/>
    </location>
</feature>
<feature type="modified residue" description="N-acetylalanine" evidence="2">
    <location>
        <position position="2"/>
    </location>
</feature>
<feature type="disulfide bond" description="Redox-active" evidence="3">
    <location>
        <begin position="45"/>
        <end position="48"/>
    </location>
</feature>
<sequence length="123" mass="13573">MAATAEVIPAGEVIACHTVEDWNNKLKAAKESNKLIVIDFTAVWCPPCRFIAPIFVELAKKHLDVVFFKVDVDELATVAQEFDVQAMPTFVYMKGEEKLDKVVGAAKEEIEAKLLKHSQVAAA</sequence>